<dbReference type="PDB" id="6CDX">
    <property type="method" value="X-ray"/>
    <property type="resolution" value="1.00 A"/>
    <property type="chains" value="A/B=11-34"/>
</dbReference>
<dbReference type="PDBsum" id="6CDX"/>
<dbReference type="SMR" id="P82408"/>
<dbReference type="MEROPS" id="I07.004"/>
<dbReference type="GO" id="GO:0005576">
    <property type="term" value="C:extracellular region"/>
    <property type="evidence" value="ECO:0007669"/>
    <property type="project" value="UniProtKB-SubCell"/>
</dbReference>
<dbReference type="GO" id="GO:0004867">
    <property type="term" value="F:serine-type endopeptidase inhibitor activity"/>
    <property type="evidence" value="ECO:0000314"/>
    <property type="project" value="CAFA"/>
</dbReference>
<dbReference type="GO" id="GO:0006952">
    <property type="term" value="P:defense response"/>
    <property type="evidence" value="ECO:0007669"/>
    <property type="project" value="UniProtKB-KW"/>
</dbReference>
<dbReference type="GO" id="GO:1900004">
    <property type="term" value="P:negative regulation of serine-type endopeptidase activity"/>
    <property type="evidence" value="ECO:0000314"/>
    <property type="project" value="CAFA"/>
</dbReference>
<dbReference type="CDD" id="cd00150">
    <property type="entry name" value="PlantTI"/>
    <property type="match status" value="1"/>
</dbReference>
<dbReference type="FunFam" id="4.10.75.20:FF:000001">
    <property type="match status" value="1"/>
</dbReference>
<dbReference type="Gene3D" id="4.10.75.20">
    <property type="match status" value="1"/>
</dbReference>
<dbReference type="InterPro" id="IPR000737">
    <property type="entry name" value="Prot_inh_squash"/>
</dbReference>
<dbReference type="InterPro" id="IPR011052">
    <property type="entry name" value="Proteinase_amylase_inhib_sf"/>
</dbReference>
<dbReference type="Pfam" id="PF00299">
    <property type="entry name" value="Squash"/>
    <property type="match status" value="1"/>
</dbReference>
<dbReference type="SMART" id="SM00286">
    <property type="entry name" value="PTI"/>
    <property type="match status" value="1"/>
</dbReference>
<dbReference type="SUPFAM" id="SSF57027">
    <property type="entry name" value="Plant inhibitors of proteinases and amylases"/>
    <property type="match status" value="1"/>
</dbReference>
<dbReference type="PROSITE" id="PS00286">
    <property type="entry name" value="SQUASH_INHIBITOR"/>
    <property type="match status" value="1"/>
</dbReference>
<evidence type="ECO:0000250" key="1">
    <source>
        <dbReference type="UniProtKB" id="P10295"/>
    </source>
</evidence>
<evidence type="ECO:0000269" key="2">
    <source>
    </source>
</evidence>
<evidence type="ECO:0000269" key="3">
    <source>
    </source>
</evidence>
<evidence type="ECO:0000303" key="4">
    <source>
    </source>
</evidence>
<evidence type="ECO:0000305" key="5"/>
<evidence type="ECO:0000305" key="6">
    <source>
    </source>
</evidence>
<evidence type="ECO:0007744" key="7">
    <source>
        <dbReference type="PDB" id="6CDX"/>
    </source>
</evidence>
<evidence type="ECO:0007829" key="8">
    <source>
        <dbReference type="PDB" id="6CDX"/>
    </source>
</evidence>
<proteinExistence type="evidence at protein level"/>
<keyword id="KW-0002">3D-structure</keyword>
<keyword id="KW-0903">Direct protein sequencing</keyword>
<keyword id="KW-1015">Disulfide bond</keyword>
<keyword id="KW-0960">Knottin</keyword>
<keyword id="KW-0611">Plant defense</keyword>
<keyword id="KW-0646">Protease inhibitor</keyword>
<keyword id="KW-0964">Secreted</keyword>
<keyword id="KW-0722">Serine protease inhibitor</keyword>
<accession>P82408</accession>
<name>ITR1_MOMCO</name>
<sequence length="34" mass="3505">SGSDGGVCPKILQRCRRDSDCPGACICRGNGYCG</sequence>
<organism>
    <name type="scientific">Momordica cochinchinensis</name>
    <name type="common">Spiny bitter cucumber</name>
    <name type="synonym">Muricia cochinchinensis</name>
    <dbReference type="NCBI Taxonomy" id="3674"/>
    <lineage>
        <taxon>Eukaryota</taxon>
        <taxon>Viridiplantae</taxon>
        <taxon>Streptophyta</taxon>
        <taxon>Embryophyta</taxon>
        <taxon>Tracheophyta</taxon>
        <taxon>Spermatophyta</taxon>
        <taxon>Magnoliopsida</taxon>
        <taxon>eudicotyledons</taxon>
        <taxon>Gunneridae</taxon>
        <taxon>Pentapetalae</taxon>
        <taxon>rosids</taxon>
        <taxon>fabids</taxon>
        <taxon>Cucurbitales</taxon>
        <taxon>Cucurbitaceae</taxon>
        <taxon>Momordiceae</taxon>
        <taxon>Momordica</taxon>
    </lineage>
</organism>
<protein>
    <recommendedName>
        <fullName evidence="5">Trypsin inhibitor 1</fullName>
    </recommendedName>
    <alternativeName>
        <fullName evidence="4">MCoTI-I</fullName>
    </alternativeName>
    <alternativeName>
        <fullName evidence="4">Trypsin inhibitor I</fullName>
    </alternativeName>
</protein>
<reference key="1">
    <citation type="journal article" date="2000" name="Biochemistry">
        <title>Squash trypsin inhibitors from Momordica cochinchinensis exhibit an atypical macrocyclic structure.</title>
        <authorList>
            <person name="Hernandez J.-F."/>
            <person name="Gagnon J."/>
            <person name="Chiche L."/>
            <person name="Nguyen T.M."/>
            <person name="Andrieu J.-P."/>
            <person name="Heitz A."/>
            <person name="Trinh T."/>
            <person name="Pham T.T.C."/>
            <person name="Le Nguyen D."/>
        </authorList>
    </citation>
    <scope>PROTEIN SEQUENCE</scope>
    <scope>FUNCTION</scope>
    <scope>CROSS-LINK</scope>
    <scope>MASS SPECTROMETRY</scope>
    <source>
        <tissue>Seed</tissue>
    </source>
</reference>
<reference key="2">
    <citation type="journal article" date="2019" name="Nat. Commun.">
        <title>Evaluation of integrin alphavbeta6 cystine knot PET tracers to detect cancer and idiopathic pulmonary fibrosis.</title>
        <authorList>
            <person name="Kimura R.H."/>
            <person name="Wang L."/>
            <person name="Shen B."/>
            <person name="Huo L."/>
            <person name="Tummers W."/>
            <person name="Filipp F.V."/>
            <person name="Guo H.H."/>
            <person name="Haywood T."/>
            <person name="Abou-Elkacem L."/>
            <person name="Baratto L."/>
            <person name="Habte F."/>
            <person name="Devulapally R."/>
            <person name="Witney T.H."/>
            <person name="Cheng Y."/>
            <person name="Tikole S."/>
            <person name="Chakraborti S."/>
            <person name="Nix J."/>
            <person name="Bonagura C.A."/>
            <person name="Hatami N."/>
            <person name="Mooney J.J."/>
            <person name="Desai T."/>
            <person name="Turner S."/>
            <person name="Gaster R.S."/>
            <person name="Otte A."/>
            <person name="Visser B.C."/>
            <person name="Poultsides G.A."/>
            <person name="Norton J."/>
            <person name="Park W."/>
            <person name="Stolowitz M."/>
            <person name="Lau K."/>
            <person name="Yang E."/>
            <person name="Natarajan A."/>
            <person name="Ilovich O."/>
            <person name="Srinivas S."/>
            <person name="Srinivasan A."/>
            <person name="Paulmurugan R."/>
            <person name="Willmann J."/>
            <person name="Chin F.T."/>
            <person name="Cheng Z."/>
            <person name="Iagaru A."/>
            <person name="Li F."/>
            <person name="Gambhir S.S."/>
        </authorList>
    </citation>
    <scope>X-RAY CRYSTALLOGRAPHY (1.00 ANGSTROMS) OF 11-34</scope>
    <scope>DISULFIDE BONDS</scope>
</reference>
<comment type="function">
    <text evidence="6">Inhibits trypsin; probably participates in a plant defense mechanism.</text>
</comment>
<comment type="subcellular location">
    <subcellularLocation>
        <location evidence="5">Secreted</location>
    </subcellularLocation>
</comment>
<comment type="domain">
    <text evidence="1">The presence of a 'disulfide through disulfide knot' structurally defines this protein as a knottin.</text>
</comment>
<comment type="PTM">
    <text evidence="2">This is a cyclic peptide.</text>
</comment>
<comment type="mass spectrometry" mass="3480.7" error="0.3" method="Electrospray" evidence="2"/>
<comment type="similarity">
    <text evidence="5">Belongs to the protease inhibitor I7 (squash-type serine protease inhibitor) family.</text>
</comment>
<feature type="peptide" id="PRO_0000044857" description="Trypsin inhibitor 1">
    <location>
        <begin position="1"/>
        <end position="34"/>
    </location>
</feature>
<feature type="site" description="Reactive bond">
    <location>
        <begin position="10"/>
        <end position="11"/>
    </location>
</feature>
<feature type="disulfide bond" evidence="3 7">
    <location>
        <begin position="8"/>
        <end position="25"/>
    </location>
</feature>
<feature type="disulfide bond" evidence="3 7">
    <location>
        <begin position="15"/>
        <end position="27"/>
    </location>
</feature>
<feature type="disulfide bond" evidence="3 7">
    <location>
        <begin position="21"/>
        <end position="33"/>
    </location>
</feature>
<feature type="cross-link" description="Cyclopeptide (Ser-Gly)" evidence="2">
    <location>
        <begin position="1"/>
        <end position="34"/>
    </location>
</feature>
<feature type="helix" evidence="8">
    <location>
        <begin position="18"/>
        <end position="20"/>
    </location>
</feature>
<feature type="strand" evidence="8">
    <location>
        <begin position="31"/>
        <end position="34"/>
    </location>
</feature>